<accession>A9BGL2</accession>
<reference key="1">
    <citation type="submission" date="2007-11" db="EMBL/GenBank/DDBJ databases">
        <title>Complete sequence of Petroga mobilis SJ95.</title>
        <authorList>
            <consortium name="US DOE Joint Genome Institute"/>
            <person name="Copeland A."/>
            <person name="Lucas S."/>
            <person name="Lapidus A."/>
            <person name="Barry K."/>
            <person name="Glavina del Rio T."/>
            <person name="Dalin E."/>
            <person name="Tice H."/>
            <person name="Pitluck S."/>
            <person name="Meincke L."/>
            <person name="Brettin T."/>
            <person name="Bruce D."/>
            <person name="Detter J.C."/>
            <person name="Han C."/>
            <person name="Kuske C.R."/>
            <person name="Schmutz J."/>
            <person name="Larimer F."/>
            <person name="Land M."/>
            <person name="Hauser L."/>
            <person name="Kyrpides N."/>
            <person name="Mikhailova N."/>
            <person name="Noll K."/>
            <person name="Richardson P."/>
        </authorList>
    </citation>
    <scope>NUCLEOTIDE SEQUENCE [LARGE SCALE GENOMIC DNA]</scope>
    <source>
        <strain>DSM 10674 / SJ95</strain>
    </source>
</reference>
<name>MNMG_PETMO</name>
<sequence>MENKENSFDVIVVGAGHAGIEAALASAKMGMNTLILNINLDTLGWAPCNPAIGGPAKGVVAREIDALGGVQAKVTDETMINIRMLNTSKGIAVRALRAQIDKYDYSQRMKEILETTDNLILRHGIAKNILVENGKIIGLETELGMKYFAKVVILTTGTFLRGKIFVGRNTFEAGRMGELPANSLTYSLIKEGLEVSRFKTGTPARVRKDSIDFSKFDIQETADEPLAFSYWSQPRVLTKDYPCYLGRTNSKTHEVIRKYIAFSPLYGDVKLIQSIGPRYCPSIEDKVMKFNKDTHQFFLEPESKHSKEIYLNGLSTSLPFEAQIEILKTIPGLENAIIERPAYAVEYDFVNPIQLKHNLETKKIEGLFLAGQINGTSGYEEAAGQGLLAGINAALKIRGEEPFVLDRSEAYLGVLIDDLITKGVDEPYRLLTSRAEYRLLLRHDNAHLRLYKYGYKYGLLSKEQYEQLHRLENLINHQIERLDQIKVSPNQVNDILASKGSSKITQPVHMSELLKRSEISYTDLKHLDEEAVEEKEVIEQIDIHFKYNGYFQRMQDEIAKMKELEKEKIPSDIEYDKINNIAYEAKEKLKKIKPETFGQLLRIPGINPADAINLRIYLKQKDKIR</sequence>
<protein>
    <recommendedName>
        <fullName evidence="1">tRNA uridine 5-carboxymethylaminomethyl modification enzyme MnmG</fullName>
    </recommendedName>
    <alternativeName>
        <fullName evidence="1">Glucose-inhibited division protein A</fullName>
    </alternativeName>
</protein>
<dbReference type="EMBL" id="CP000879">
    <property type="protein sequence ID" value="ABX32252.1"/>
    <property type="molecule type" value="Genomic_DNA"/>
</dbReference>
<dbReference type="RefSeq" id="WP_012209350.1">
    <property type="nucleotide sequence ID" value="NC_010003.1"/>
</dbReference>
<dbReference type="SMR" id="A9BGL2"/>
<dbReference type="STRING" id="403833.Pmob_1551"/>
<dbReference type="KEGG" id="pmo:Pmob_1551"/>
<dbReference type="eggNOG" id="COG0445">
    <property type="taxonomic scope" value="Bacteria"/>
</dbReference>
<dbReference type="HOGENOM" id="CLU_007831_2_2_0"/>
<dbReference type="OrthoDB" id="9815560at2"/>
<dbReference type="Proteomes" id="UP000000789">
    <property type="component" value="Chromosome"/>
</dbReference>
<dbReference type="GO" id="GO:0005829">
    <property type="term" value="C:cytosol"/>
    <property type="evidence" value="ECO:0007669"/>
    <property type="project" value="TreeGrafter"/>
</dbReference>
<dbReference type="GO" id="GO:0050660">
    <property type="term" value="F:flavin adenine dinucleotide binding"/>
    <property type="evidence" value="ECO:0007669"/>
    <property type="project" value="UniProtKB-UniRule"/>
</dbReference>
<dbReference type="GO" id="GO:0030488">
    <property type="term" value="P:tRNA methylation"/>
    <property type="evidence" value="ECO:0007669"/>
    <property type="project" value="TreeGrafter"/>
</dbReference>
<dbReference type="GO" id="GO:0002098">
    <property type="term" value="P:tRNA wobble uridine modification"/>
    <property type="evidence" value="ECO:0007669"/>
    <property type="project" value="InterPro"/>
</dbReference>
<dbReference type="FunFam" id="1.10.150.570:FF:000001">
    <property type="entry name" value="tRNA uridine 5-carboxymethylaminomethyl modification enzyme MnmG"/>
    <property type="match status" value="1"/>
</dbReference>
<dbReference type="FunFam" id="3.50.50.60:FF:000002">
    <property type="entry name" value="tRNA uridine 5-carboxymethylaminomethyl modification enzyme MnmG"/>
    <property type="match status" value="1"/>
</dbReference>
<dbReference type="Gene3D" id="3.50.50.60">
    <property type="entry name" value="FAD/NAD(P)-binding domain"/>
    <property type="match status" value="2"/>
</dbReference>
<dbReference type="Gene3D" id="1.10.150.570">
    <property type="entry name" value="GidA associated domain, C-terminal subdomain"/>
    <property type="match status" value="1"/>
</dbReference>
<dbReference type="Gene3D" id="1.10.10.1800">
    <property type="entry name" value="tRNA uridine 5-carboxymethylaminomethyl modification enzyme MnmG/GidA"/>
    <property type="match status" value="1"/>
</dbReference>
<dbReference type="HAMAP" id="MF_00129">
    <property type="entry name" value="MnmG_GidA"/>
    <property type="match status" value="1"/>
</dbReference>
<dbReference type="InterPro" id="IPR036188">
    <property type="entry name" value="FAD/NAD-bd_sf"/>
</dbReference>
<dbReference type="InterPro" id="IPR049312">
    <property type="entry name" value="GIDA_C_N"/>
</dbReference>
<dbReference type="InterPro" id="IPR004416">
    <property type="entry name" value="MnmG"/>
</dbReference>
<dbReference type="InterPro" id="IPR002218">
    <property type="entry name" value="MnmG-rel"/>
</dbReference>
<dbReference type="InterPro" id="IPR020595">
    <property type="entry name" value="MnmG-rel_CS"/>
</dbReference>
<dbReference type="InterPro" id="IPR026904">
    <property type="entry name" value="MnmG_C"/>
</dbReference>
<dbReference type="InterPro" id="IPR047001">
    <property type="entry name" value="MnmG_C_subdom"/>
</dbReference>
<dbReference type="InterPro" id="IPR044920">
    <property type="entry name" value="MnmG_C_subdom_sf"/>
</dbReference>
<dbReference type="InterPro" id="IPR040131">
    <property type="entry name" value="MnmG_N"/>
</dbReference>
<dbReference type="NCBIfam" id="TIGR00136">
    <property type="entry name" value="mnmG_gidA"/>
    <property type="match status" value="1"/>
</dbReference>
<dbReference type="PANTHER" id="PTHR11806">
    <property type="entry name" value="GLUCOSE INHIBITED DIVISION PROTEIN A"/>
    <property type="match status" value="1"/>
</dbReference>
<dbReference type="PANTHER" id="PTHR11806:SF0">
    <property type="entry name" value="PROTEIN MTO1 HOMOLOG, MITOCHONDRIAL"/>
    <property type="match status" value="1"/>
</dbReference>
<dbReference type="Pfam" id="PF01134">
    <property type="entry name" value="GIDA"/>
    <property type="match status" value="1"/>
</dbReference>
<dbReference type="Pfam" id="PF21680">
    <property type="entry name" value="GIDA_C_1st"/>
    <property type="match status" value="1"/>
</dbReference>
<dbReference type="Pfam" id="PF13932">
    <property type="entry name" value="SAM_GIDA_C"/>
    <property type="match status" value="1"/>
</dbReference>
<dbReference type="PRINTS" id="PR00411">
    <property type="entry name" value="PNDRDTASEI"/>
</dbReference>
<dbReference type="SMART" id="SM01228">
    <property type="entry name" value="GIDA_assoc_3"/>
    <property type="match status" value="1"/>
</dbReference>
<dbReference type="SUPFAM" id="SSF51905">
    <property type="entry name" value="FAD/NAD(P)-binding domain"/>
    <property type="match status" value="1"/>
</dbReference>
<dbReference type="PROSITE" id="PS01280">
    <property type="entry name" value="GIDA_1"/>
    <property type="match status" value="1"/>
</dbReference>
<dbReference type="PROSITE" id="PS01281">
    <property type="entry name" value="GIDA_2"/>
    <property type="match status" value="1"/>
</dbReference>
<gene>
    <name evidence="1" type="primary">mnmG</name>
    <name evidence="1" type="synonym">gidA</name>
    <name type="ordered locus">Pmob_1551</name>
</gene>
<keyword id="KW-0963">Cytoplasm</keyword>
<keyword id="KW-0274">FAD</keyword>
<keyword id="KW-0285">Flavoprotein</keyword>
<keyword id="KW-0520">NAD</keyword>
<keyword id="KW-0819">tRNA processing</keyword>
<evidence type="ECO:0000255" key="1">
    <source>
        <dbReference type="HAMAP-Rule" id="MF_00129"/>
    </source>
</evidence>
<proteinExistence type="inferred from homology"/>
<comment type="function">
    <text evidence="1">NAD-binding protein involved in the addition of a carboxymethylaminomethyl (cmnm) group at the wobble position (U34) of certain tRNAs, forming tRNA-cmnm(5)s(2)U34.</text>
</comment>
<comment type="cofactor">
    <cofactor evidence="1">
        <name>FAD</name>
        <dbReference type="ChEBI" id="CHEBI:57692"/>
    </cofactor>
</comment>
<comment type="subunit">
    <text evidence="1">Homodimer. Heterotetramer of two MnmE and two MnmG subunits.</text>
</comment>
<comment type="subcellular location">
    <subcellularLocation>
        <location evidence="1">Cytoplasm</location>
    </subcellularLocation>
</comment>
<comment type="similarity">
    <text evidence="1">Belongs to the MnmG family.</text>
</comment>
<organism>
    <name type="scientific">Petrotoga mobilis (strain DSM 10674 / SJ95)</name>
    <dbReference type="NCBI Taxonomy" id="403833"/>
    <lineage>
        <taxon>Bacteria</taxon>
        <taxon>Thermotogati</taxon>
        <taxon>Thermotogota</taxon>
        <taxon>Thermotogae</taxon>
        <taxon>Petrotogales</taxon>
        <taxon>Petrotogaceae</taxon>
        <taxon>Petrotoga</taxon>
    </lineage>
</organism>
<feature type="chain" id="PRO_1000076323" description="tRNA uridine 5-carboxymethylaminomethyl modification enzyme MnmG">
    <location>
        <begin position="1"/>
        <end position="625"/>
    </location>
</feature>
<feature type="binding site" evidence="1">
    <location>
        <begin position="14"/>
        <end position="19"/>
    </location>
    <ligand>
        <name>FAD</name>
        <dbReference type="ChEBI" id="CHEBI:57692"/>
    </ligand>
</feature>
<feature type="binding site" evidence="1">
    <location>
        <begin position="276"/>
        <end position="290"/>
    </location>
    <ligand>
        <name>NAD(+)</name>
        <dbReference type="ChEBI" id="CHEBI:57540"/>
    </ligand>
</feature>